<evidence type="ECO:0000255" key="1"/>
<evidence type="ECO:0000269" key="2">
    <source>
    </source>
</evidence>
<evidence type="ECO:0000303" key="3">
    <source>
    </source>
</evidence>
<evidence type="ECO:0000305" key="4"/>
<evidence type="ECO:0000305" key="5">
    <source>
    </source>
</evidence>
<evidence type="ECO:0000312" key="6">
    <source>
        <dbReference type="EMBL" id="CCC80434.1"/>
    </source>
</evidence>
<gene>
    <name evidence="3 6" type="primary">glpF6</name>
    <name evidence="6" type="ordered locus">lp_3463</name>
</gene>
<proteinExistence type="inferred from homology"/>
<protein>
    <recommendedName>
        <fullName evidence="5">Glycerol uptake facilitator protein-like 6</fullName>
    </recommendedName>
</protein>
<keyword id="KW-1003">Cell membrane</keyword>
<keyword id="KW-0472">Membrane</keyword>
<keyword id="KW-1185">Reference proteome</keyword>
<keyword id="KW-0812">Transmembrane</keyword>
<keyword id="KW-1133">Transmembrane helix</keyword>
<keyword id="KW-0813">Transport</keyword>
<reference key="1">
    <citation type="journal article" date="2003" name="Proc. Natl. Acad. Sci. U.S.A.">
        <title>Complete genome sequence of Lactobacillus plantarum WCFS1.</title>
        <authorList>
            <person name="Kleerebezem M."/>
            <person name="Boekhorst J."/>
            <person name="van Kranenburg R."/>
            <person name="Molenaar D."/>
            <person name="Kuipers O.P."/>
            <person name="Leer R."/>
            <person name="Tarchini R."/>
            <person name="Peters S.A."/>
            <person name="Sandbrink H.M."/>
            <person name="Fiers M.W.E.J."/>
            <person name="Stiekema W."/>
            <person name="Klein Lankhorst R.M."/>
            <person name="Bron P.A."/>
            <person name="Hoffer S.M."/>
            <person name="Nierop Groot M.N."/>
            <person name="Kerkhoven R."/>
            <person name="De Vries M."/>
            <person name="Ursing B."/>
            <person name="De Vos W.M."/>
            <person name="Siezen R.J."/>
        </authorList>
    </citation>
    <scope>NUCLEOTIDE SEQUENCE [LARGE SCALE GENOMIC DNA]</scope>
    <source>
        <strain>ATCC BAA-793 / NCIMB 8826 / WCFS1</strain>
    </source>
</reference>
<reference key="2">
    <citation type="journal article" date="2012" name="J. Bacteriol.">
        <title>Complete resequencing and reannotation of the Lactobacillus plantarum WCFS1 genome.</title>
        <authorList>
            <person name="Siezen R.J."/>
            <person name="Francke C."/>
            <person name="Renckens B."/>
            <person name="Boekhorst J."/>
            <person name="Wels M."/>
            <person name="Kleerebezem M."/>
            <person name="van Hijum S.A."/>
        </authorList>
    </citation>
    <scope>NUCLEOTIDE SEQUENCE [LARGE SCALE GENOMIC DNA]</scope>
    <scope>GENOME REANNOTATION</scope>
    <source>
        <strain>ATCC BAA-793 / NCIMB 8826 / WCFS1</strain>
    </source>
</reference>
<reference key="3">
    <citation type="journal article" date="2013" name="Biochem. J.">
        <title>Channel-mediated lactic acid transport: a novel function for aquaglyceroporins in bacteria.</title>
        <authorList>
            <person name="Bienert G.P."/>
            <person name="Desguin B."/>
            <person name="Chaumont F."/>
            <person name="Hols P."/>
        </authorList>
    </citation>
    <scope>FUNCTION</scope>
    <scope>SUBCELLULAR LOCATION</scope>
    <source>
        <strain>ATCC BAA-793 / NCIMB 8826 / WCFS1</strain>
    </source>
</reference>
<organism>
    <name type="scientific">Lactiplantibacillus plantarum (strain ATCC BAA-793 / NCIMB 8826 / WCFS1)</name>
    <name type="common">Lactobacillus plantarum</name>
    <dbReference type="NCBI Taxonomy" id="220668"/>
    <lineage>
        <taxon>Bacteria</taxon>
        <taxon>Bacillati</taxon>
        <taxon>Bacillota</taxon>
        <taxon>Bacilli</taxon>
        <taxon>Lactobacillales</taxon>
        <taxon>Lactobacillaceae</taxon>
        <taxon>Lactiplantibacillus</taxon>
    </lineage>
</organism>
<feature type="chain" id="PRO_0000441647" description="Glycerol uptake facilitator protein-like 6">
    <location>
        <begin position="1"/>
        <end position="216"/>
    </location>
</feature>
<feature type="transmembrane region" description="Helical" evidence="1">
    <location>
        <begin position="5"/>
        <end position="25"/>
    </location>
</feature>
<feature type="transmembrane region" description="Helical" evidence="1">
    <location>
        <begin position="30"/>
        <end position="50"/>
    </location>
</feature>
<feature type="transmembrane region" description="Helical" evidence="1">
    <location>
        <begin position="72"/>
        <end position="92"/>
    </location>
</feature>
<feature type="transmembrane region" description="Helical" evidence="1">
    <location>
        <begin position="114"/>
        <end position="134"/>
    </location>
</feature>
<feature type="transmembrane region" description="Helical" evidence="1">
    <location>
        <begin position="147"/>
        <end position="167"/>
    </location>
</feature>
<feature type="transmembrane region" description="Helical" evidence="1">
    <location>
        <begin position="191"/>
        <end position="213"/>
    </location>
</feature>
<feature type="short sequence motif" description="NPA 1" evidence="5">
    <location>
        <begin position="56"/>
        <end position="58"/>
    </location>
</feature>
<feature type="short sequence motif" description="NPA 2" evidence="5">
    <location>
        <begin position="172"/>
        <end position="174"/>
    </location>
</feature>
<accession>F9UUD2</accession>
<name>GLPF6_LACPL</name>
<comment type="function">
    <text evidence="2">Probable transporter that facilitates the transmembrane diffusion of an unknown substrate. Is not permeable to water, dihydroxyacetone, glycerol, urea, H(2)O(2) and D/L-lactic acid.</text>
</comment>
<comment type="subcellular location">
    <subcellularLocation>
        <location evidence="2">Cell membrane</location>
        <topology evidence="1">Multi-pass membrane protein</topology>
    </subcellularLocation>
</comment>
<comment type="similarity">
    <text evidence="4">Belongs to the MIP/aquaporin (TC 1.A.8) family.</text>
</comment>
<dbReference type="EMBL" id="AL935263">
    <property type="protein sequence ID" value="CCC80434.1"/>
    <property type="molecule type" value="Genomic_DNA"/>
</dbReference>
<dbReference type="RefSeq" id="WP_011102173.1">
    <property type="nucleotide sequence ID" value="NC_004567.2"/>
</dbReference>
<dbReference type="RefSeq" id="YP_004890948.1">
    <property type="nucleotide sequence ID" value="NC_004567.2"/>
</dbReference>
<dbReference type="SMR" id="F9UUD2"/>
<dbReference type="STRING" id="220668.lp_3463"/>
<dbReference type="EnsemblBacteria" id="CCC80434">
    <property type="protein sequence ID" value="CCC80434"/>
    <property type="gene ID" value="lp_3463"/>
</dbReference>
<dbReference type="KEGG" id="lpl:lp_3463"/>
<dbReference type="PATRIC" id="fig|220668.9.peg.2882"/>
<dbReference type="eggNOG" id="COG0580">
    <property type="taxonomic scope" value="Bacteria"/>
</dbReference>
<dbReference type="HOGENOM" id="CLU_020019_3_2_9"/>
<dbReference type="OrthoDB" id="9807293at2"/>
<dbReference type="PhylomeDB" id="F9UUD2"/>
<dbReference type="Proteomes" id="UP000000432">
    <property type="component" value="Chromosome"/>
</dbReference>
<dbReference type="GO" id="GO:0005886">
    <property type="term" value="C:plasma membrane"/>
    <property type="evidence" value="ECO:0007669"/>
    <property type="project" value="UniProtKB-SubCell"/>
</dbReference>
<dbReference type="GO" id="GO:0015250">
    <property type="term" value="F:water channel activity"/>
    <property type="evidence" value="ECO:0007669"/>
    <property type="project" value="TreeGrafter"/>
</dbReference>
<dbReference type="Gene3D" id="1.20.1080.10">
    <property type="entry name" value="Glycerol uptake facilitator protein"/>
    <property type="match status" value="1"/>
</dbReference>
<dbReference type="InterPro" id="IPR023271">
    <property type="entry name" value="Aquaporin-like"/>
</dbReference>
<dbReference type="InterPro" id="IPR034294">
    <property type="entry name" value="Aquaporin_transptr"/>
</dbReference>
<dbReference type="InterPro" id="IPR000425">
    <property type="entry name" value="MIP"/>
</dbReference>
<dbReference type="PANTHER" id="PTHR19139">
    <property type="entry name" value="AQUAPORIN TRANSPORTER"/>
    <property type="match status" value="1"/>
</dbReference>
<dbReference type="PANTHER" id="PTHR19139:SF199">
    <property type="entry name" value="MIP17260P"/>
    <property type="match status" value="1"/>
</dbReference>
<dbReference type="Pfam" id="PF00230">
    <property type="entry name" value="MIP"/>
    <property type="match status" value="1"/>
</dbReference>
<dbReference type="PRINTS" id="PR00783">
    <property type="entry name" value="MINTRINSICP"/>
</dbReference>
<dbReference type="SUPFAM" id="SSF81338">
    <property type="entry name" value="Aquaporin-like"/>
    <property type="match status" value="1"/>
</dbReference>
<sequence length="216" mass="22133">MRKYLAEFLGTFMLVFLGTATVVIAKGDVLAIGLAFGLAITVSAYAFGGISGGHFNPAVTTAMLINRRIDAADAIGYIIAQIIGAIVASAAVKSFVSALGLSATLLGQTDFPKIGSGMAFFVEALVTFLFLMVILNVTSNDHGNADFAGLTIGVTLAFLIIVALNLTGGSLNPARSIGPAIFAGGSALSHLWVYILAPEVGAILAAFCARVMGSED</sequence>